<accession>A3KMW7</accession>
<feature type="chain" id="PRO_0000403446" description="Microtubule-associated protein 10">
    <location>
        <begin position="1"/>
        <end position="912"/>
    </location>
</feature>
<feature type="region of interest" description="Disordered" evidence="2">
    <location>
        <begin position="31"/>
        <end position="50"/>
    </location>
</feature>
<feature type="region of interest" description="Disordered" evidence="2">
    <location>
        <begin position="209"/>
        <end position="239"/>
    </location>
</feature>
<feature type="region of interest" description="Disordered" evidence="2">
    <location>
        <begin position="254"/>
        <end position="296"/>
    </location>
</feature>
<feature type="region of interest" description="Disordered" evidence="2">
    <location>
        <begin position="335"/>
        <end position="366"/>
    </location>
</feature>
<feature type="region of interest" description="Disordered" evidence="2">
    <location>
        <begin position="443"/>
        <end position="469"/>
    </location>
</feature>
<feature type="region of interest" description="Disordered" evidence="2">
    <location>
        <begin position="730"/>
        <end position="859"/>
    </location>
</feature>
<feature type="compositionally biased region" description="Polar residues" evidence="2">
    <location>
        <begin position="211"/>
        <end position="229"/>
    </location>
</feature>
<feature type="compositionally biased region" description="Basic and acidic residues" evidence="2">
    <location>
        <begin position="254"/>
        <end position="263"/>
    </location>
</feature>
<feature type="compositionally biased region" description="Polar residues" evidence="2">
    <location>
        <begin position="266"/>
        <end position="295"/>
    </location>
</feature>
<feature type="compositionally biased region" description="Low complexity" evidence="2">
    <location>
        <begin position="347"/>
        <end position="362"/>
    </location>
</feature>
<feature type="compositionally biased region" description="Basic and acidic residues" evidence="2">
    <location>
        <begin position="452"/>
        <end position="468"/>
    </location>
</feature>
<feature type="compositionally biased region" description="Polar residues" evidence="2">
    <location>
        <begin position="735"/>
        <end position="768"/>
    </location>
</feature>
<feature type="compositionally biased region" description="Low complexity" evidence="2">
    <location>
        <begin position="796"/>
        <end position="807"/>
    </location>
</feature>
<feature type="compositionally biased region" description="Polar residues" evidence="2">
    <location>
        <begin position="841"/>
        <end position="859"/>
    </location>
</feature>
<evidence type="ECO:0000250" key="1"/>
<evidence type="ECO:0000256" key="2">
    <source>
        <dbReference type="SAM" id="MobiDB-lite"/>
    </source>
</evidence>
<gene>
    <name type="primary">MAP10</name>
</gene>
<keyword id="KW-0131">Cell cycle</keyword>
<keyword id="KW-0132">Cell division</keyword>
<keyword id="KW-0963">Cytoplasm</keyword>
<keyword id="KW-0206">Cytoskeleton</keyword>
<keyword id="KW-1185">Reference proteome</keyword>
<comment type="function">
    <text evidence="1">Microtubule-associated protein (MAP) that plays a role in the regulation of cell division; promotes microtubule stability and participates in the organization of the spindle midzone and normal progress of cytokinesis.</text>
</comment>
<comment type="subunit">
    <text evidence="1">Interacts (via middle region) with microtubules.</text>
</comment>
<comment type="subcellular location">
    <subcellularLocation>
        <location evidence="1">Cytoplasm</location>
        <location evidence="1">Cytoskeleton</location>
    </subcellularLocation>
    <subcellularLocation>
        <location evidence="1">Cytoplasm</location>
        <location evidence="1">Cytoskeleton</location>
        <location evidence="1">Spindle pole</location>
    </subcellularLocation>
    <subcellularLocation>
        <location evidence="1">Cytoplasm</location>
        <location evidence="1">Cytoskeleton</location>
        <location evidence="1">Microtubule organizing center</location>
        <location evidence="1">Centrosome</location>
    </subcellularLocation>
    <subcellularLocation>
        <location evidence="1">Midbody</location>
    </subcellularLocation>
    <text evidence="1">Localized at stabilized microtubules (MTs) during interphase and to the mitotic apparatus during mitosis. Localized at spindle poles in metaphase and spindle midzone during telophase. Colocalized with Polo-like kinase PLK1 to the center of spindle midzone. Localized at the midbody during cytokinesis. Colocalized with acetylated-tubulin at MTs (By similarity).</text>
</comment>
<dbReference type="EMBL" id="BC133339">
    <property type="protein sequence ID" value="AAI33340.1"/>
    <property type="molecule type" value="mRNA"/>
</dbReference>
<dbReference type="RefSeq" id="NP_001091617.1">
    <property type="nucleotide sequence ID" value="NM_001098148.1"/>
</dbReference>
<dbReference type="FunCoup" id="A3KMW7">
    <property type="interactions" value="278"/>
</dbReference>
<dbReference type="STRING" id="9913.ENSBTAP00000016680"/>
<dbReference type="PaxDb" id="9913-ENSBTAP00000016680"/>
<dbReference type="Ensembl" id="ENSBTAT00000016680.6">
    <property type="protein sequence ID" value="ENSBTAP00000016680.4"/>
    <property type="gene ID" value="ENSBTAG00000012566.6"/>
</dbReference>
<dbReference type="GeneID" id="781199"/>
<dbReference type="KEGG" id="bta:781199"/>
<dbReference type="CTD" id="54627"/>
<dbReference type="VEuPathDB" id="HostDB:ENSBTAG00000012566"/>
<dbReference type="VGNC" id="VGNC:31176">
    <property type="gene designation" value="MAP10"/>
</dbReference>
<dbReference type="eggNOG" id="ENOG502QVBX">
    <property type="taxonomic scope" value="Eukaryota"/>
</dbReference>
<dbReference type="GeneTree" id="ENSGT00390000008459"/>
<dbReference type="HOGENOM" id="CLU_014844_0_0_1"/>
<dbReference type="InParanoid" id="A3KMW7"/>
<dbReference type="OMA" id="EDFCTTE"/>
<dbReference type="OrthoDB" id="69809at2759"/>
<dbReference type="TreeFam" id="TF338644"/>
<dbReference type="Proteomes" id="UP000009136">
    <property type="component" value="Chromosome 28"/>
</dbReference>
<dbReference type="Bgee" id="ENSBTAG00000012566">
    <property type="expression patterns" value="Expressed in spermatid and 104 other cell types or tissues"/>
</dbReference>
<dbReference type="GO" id="GO:0005813">
    <property type="term" value="C:centrosome"/>
    <property type="evidence" value="ECO:0000250"/>
    <property type="project" value="UniProtKB"/>
</dbReference>
<dbReference type="GO" id="GO:0005881">
    <property type="term" value="C:cytoplasmic microtubule"/>
    <property type="evidence" value="ECO:0000250"/>
    <property type="project" value="UniProtKB"/>
</dbReference>
<dbReference type="GO" id="GO:0030496">
    <property type="term" value="C:midbody"/>
    <property type="evidence" value="ECO:0000250"/>
    <property type="project" value="UniProtKB"/>
</dbReference>
<dbReference type="GO" id="GO:1990023">
    <property type="term" value="C:mitotic spindle midzone"/>
    <property type="evidence" value="ECO:0000250"/>
    <property type="project" value="UniProtKB"/>
</dbReference>
<dbReference type="GO" id="GO:0097431">
    <property type="term" value="C:mitotic spindle pole"/>
    <property type="evidence" value="ECO:0000250"/>
    <property type="project" value="UniProtKB"/>
</dbReference>
<dbReference type="GO" id="GO:0008017">
    <property type="term" value="F:microtubule binding"/>
    <property type="evidence" value="ECO:0000250"/>
    <property type="project" value="UniProtKB"/>
</dbReference>
<dbReference type="GO" id="GO:0051301">
    <property type="term" value="P:cell division"/>
    <property type="evidence" value="ECO:0007669"/>
    <property type="project" value="UniProtKB-KW"/>
</dbReference>
<dbReference type="GO" id="GO:0031122">
    <property type="term" value="P:cytoplasmic microtubule organization"/>
    <property type="evidence" value="ECO:0000250"/>
    <property type="project" value="UniProtKB"/>
</dbReference>
<dbReference type="GO" id="GO:0051256">
    <property type="term" value="P:mitotic spindle midzone assembly"/>
    <property type="evidence" value="ECO:0000250"/>
    <property type="project" value="UniProtKB"/>
</dbReference>
<dbReference type="GO" id="GO:0032467">
    <property type="term" value="P:positive regulation of cytokinesis"/>
    <property type="evidence" value="ECO:0000250"/>
    <property type="project" value="UniProtKB"/>
</dbReference>
<dbReference type="GO" id="GO:0032886">
    <property type="term" value="P:regulation of microtubule-based process"/>
    <property type="evidence" value="ECO:0000250"/>
    <property type="project" value="UniProtKB"/>
</dbReference>
<dbReference type="InterPro" id="IPR039302">
    <property type="entry name" value="MAP10"/>
</dbReference>
<dbReference type="InterPro" id="IPR026679">
    <property type="entry name" value="MAP10_C-term"/>
</dbReference>
<dbReference type="PANTHER" id="PTHR21831">
    <property type="entry name" value="MICROTUBULE-ASSOCIATED PROTEIN 10"/>
    <property type="match status" value="1"/>
</dbReference>
<dbReference type="PANTHER" id="PTHR21831:SF2">
    <property type="entry name" value="MICROTUBULE-ASSOCIATED PROTEIN 10"/>
    <property type="match status" value="1"/>
</dbReference>
<dbReference type="Pfam" id="PF14925">
    <property type="entry name" value="HPHLAWLY"/>
    <property type="match status" value="1"/>
</dbReference>
<dbReference type="Pfam" id="PF14924">
    <property type="entry name" value="MAP10_N"/>
    <property type="match status" value="1"/>
</dbReference>
<protein>
    <recommendedName>
        <fullName>Microtubule-associated protein 10</fullName>
    </recommendedName>
    <alternativeName>
        <fullName>Microtubule regulator of 120 KDa</fullName>
    </alternativeName>
</protein>
<proteinExistence type="evidence at transcript level"/>
<name>MAP10_BOVIN</name>
<organism>
    <name type="scientific">Bos taurus</name>
    <name type="common">Bovine</name>
    <dbReference type="NCBI Taxonomy" id="9913"/>
    <lineage>
        <taxon>Eukaryota</taxon>
        <taxon>Metazoa</taxon>
        <taxon>Chordata</taxon>
        <taxon>Craniata</taxon>
        <taxon>Vertebrata</taxon>
        <taxon>Euteleostomi</taxon>
        <taxon>Mammalia</taxon>
        <taxon>Eutheria</taxon>
        <taxon>Laurasiatheria</taxon>
        <taxon>Artiodactyla</taxon>
        <taxon>Ruminantia</taxon>
        <taxon>Pecora</taxon>
        <taxon>Bovidae</taxon>
        <taxon>Bovinae</taxon>
        <taxon>Bos</taxon>
    </lineage>
</organism>
<sequence>MASAVSERLFSLELLVDWVCLEAGLPQPPVVAEEEQKEEGEGASPPRPSRSLCPAVAFRLLDFPTLLIYPPAGPAAPAQESRPGLVSFRRGKSCLFRLQPATLHRLLLRTPLYTLLLQLPPGHPTPAPQLLGACSISLAAAVHKVLGFAAPGSSQSHRGSFPLCNRDGERIGDIALGYRLSDLGSSLLGHLERPVASPGGGVEGMEVQKSVEVSPQTWQENQQLQQPDSEPSPGDADKPLVDVKISRAGKDLKGRAFHSKADSDYTDSMENGKTNSDMCSKGSSERSVSPPNQEGTEVELETNIICPPPLYYTHLTQEKTPPKQGKITIEPQINASEEWDDGTFLKENVNPPTHTNPPEHTNSATGESCSVLINPASVQDTGASNQTTDHPPTEQNRINTIRQLPLLNALLVELSLLYNQPMANPTHIHPHLAWLYRTEDKKSPESSVKSTCKSESKKDKLSVGENEKSVSLQYKKNQTENLKKGKYFEKKGGAPQKRVSRGKLLYGLTNTLKLRLKQTNPDMLVEYEKKEQYKKMQTQMLGAKLRIPSSKVKILSFAELYQKPHELPKDKCLESDASFAENSNTSKQISVVVDDPSTTTETKLNCATEKTVDCDENRSNNGFLGEILSPANSVVSERFICTNTLEGKVFGRKSIQSPGVFQQVAVVDRTVVDKEIDDKQVKITGDDILTVDINEKNPSTSSCSESISELKYSDDFTSPCSSEDTSRILRACDSSPGTENPKNSQHTSTSSETRLSIRKNSSAKSSILSPPFSAGSPVLSHKRFPVSKTQDKSLEEASSSDFSSSQWTEEKENQRDQNSMHNSKVIKQDHDISAKPKTRTGCKSSEKSQSPRTSQVSSYLPSNLSELELNVLDCSTLDHFEEDCDDLGSLNISKQCKDICELVINKLPGYTV</sequence>
<reference key="1">
    <citation type="submission" date="2007-02" db="EMBL/GenBank/DDBJ databases">
        <authorList>
            <consortium name="NIH - Mammalian Gene Collection (MGC) project"/>
        </authorList>
    </citation>
    <scope>NUCLEOTIDE SEQUENCE [LARGE SCALE MRNA]</scope>
    <source>
        <strain>Hereford</strain>
        <tissue>Hypothalamus</tissue>
    </source>
</reference>